<evidence type="ECO:0000255" key="1">
    <source>
        <dbReference type="HAMAP-Rule" id="MF_01224"/>
    </source>
</evidence>
<accession>A8Z372</accession>
<reference key="1">
    <citation type="journal article" date="2007" name="BMC Microbiol.">
        <title>Subtle genetic changes enhance virulence of methicillin resistant and sensitive Staphylococcus aureus.</title>
        <authorList>
            <person name="Highlander S.K."/>
            <person name="Hulten K.G."/>
            <person name="Qin X."/>
            <person name="Jiang H."/>
            <person name="Yerrapragada S."/>
            <person name="Mason E.O. Jr."/>
            <person name="Shang Y."/>
            <person name="Williams T.M."/>
            <person name="Fortunov R.M."/>
            <person name="Liu Y."/>
            <person name="Igboeli O."/>
            <person name="Petrosino J."/>
            <person name="Tirumalai M."/>
            <person name="Uzman A."/>
            <person name="Fox G.E."/>
            <person name="Cardenas A.M."/>
            <person name="Muzny D.M."/>
            <person name="Hemphill L."/>
            <person name="Ding Y."/>
            <person name="Dugan S."/>
            <person name="Blyth P.R."/>
            <person name="Buhay C.J."/>
            <person name="Dinh H.H."/>
            <person name="Hawes A.C."/>
            <person name="Holder M."/>
            <person name="Kovar C.L."/>
            <person name="Lee S.L."/>
            <person name="Liu W."/>
            <person name="Nazareth L.V."/>
            <person name="Wang Q."/>
            <person name="Zhou J."/>
            <person name="Kaplan S.L."/>
            <person name="Weinstock G.M."/>
        </authorList>
    </citation>
    <scope>NUCLEOTIDE SEQUENCE [LARGE SCALE GENOMIC DNA]</scope>
    <source>
        <strain>USA300 / TCH1516</strain>
    </source>
</reference>
<sequence>MTEFTHINQQGHAKMVDVSDKQITKRTAVAHSSITVNETIFKQISNNTNTKGNVLNTAQIAGIMAAKNTSTLIPMCHPLPLTGIDVHFSWDETNAPLYTLNIQTTVSTTGKTGVEMEALTAASATALTIYDMTKAVDKGMIIGETYLESKSGGKSGDFQRQSNQ</sequence>
<organism>
    <name type="scientific">Staphylococcus aureus (strain USA300 / TCH1516)</name>
    <dbReference type="NCBI Taxonomy" id="451516"/>
    <lineage>
        <taxon>Bacteria</taxon>
        <taxon>Bacillati</taxon>
        <taxon>Bacillota</taxon>
        <taxon>Bacilli</taxon>
        <taxon>Bacillales</taxon>
        <taxon>Staphylococcaceae</taxon>
        <taxon>Staphylococcus</taxon>
    </lineage>
</organism>
<protein>
    <recommendedName>
        <fullName evidence="1">Cyclic pyranopterin monophosphate synthase</fullName>
        <ecNumber evidence="1">4.6.1.17</ecNumber>
    </recommendedName>
    <alternativeName>
        <fullName evidence="1">Molybdenum cofactor biosynthesis protein C</fullName>
    </alternativeName>
</protein>
<comment type="function">
    <text evidence="1">Catalyzes the conversion of (8S)-3',8-cyclo-7,8-dihydroguanosine 5'-triphosphate to cyclic pyranopterin monophosphate (cPMP).</text>
</comment>
<comment type="catalytic activity">
    <reaction evidence="1">
        <text>(8S)-3',8-cyclo-7,8-dihydroguanosine 5'-triphosphate = cyclic pyranopterin phosphate + diphosphate</text>
        <dbReference type="Rhea" id="RHEA:49580"/>
        <dbReference type="ChEBI" id="CHEBI:33019"/>
        <dbReference type="ChEBI" id="CHEBI:59648"/>
        <dbReference type="ChEBI" id="CHEBI:131766"/>
        <dbReference type="EC" id="4.6.1.17"/>
    </reaction>
</comment>
<comment type="pathway">
    <text evidence="1">Cofactor biosynthesis; molybdopterin biosynthesis.</text>
</comment>
<comment type="subunit">
    <text evidence="1">Homohexamer; trimer of dimers.</text>
</comment>
<comment type="similarity">
    <text evidence="1">Belongs to the MoaC family.</text>
</comment>
<feature type="chain" id="PRO_1000085690" description="Cyclic pyranopterin monophosphate synthase">
    <location>
        <begin position="1"/>
        <end position="164"/>
    </location>
</feature>
<feature type="active site" evidence="1">
    <location>
        <position position="131"/>
    </location>
</feature>
<feature type="binding site" evidence="1">
    <location>
        <begin position="75"/>
        <end position="77"/>
    </location>
    <ligand>
        <name>substrate</name>
    </ligand>
</feature>
<feature type="binding site" evidence="1">
    <location>
        <begin position="116"/>
        <end position="117"/>
    </location>
    <ligand>
        <name>substrate</name>
    </ligand>
</feature>
<dbReference type="EC" id="4.6.1.17" evidence="1"/>
<dbReference type="EMBL" id="CP000730">
    <property type="protein sequence ID" value="ABX30249.1"/>
    <property type="molecule type" value="Genomic_DNA"/>
</dbReference>
<dbReference type="RefSeq" id="WP_000134528.1">
    <property type="nucleotide sequence ID" value="NC_010079.1"/>
</dbReference>
<dbReference type="SMR" id="A8Z372"/>
<dbReference type="KEGG" id="sax:USA300HOU_2256"/>
<dbReference type="HOGENOM" id="CLU_074693_1_1_9"/>
<dbReference type="UniPathway" id="UPA00344"/>
<dbReference type="GO" id="GO:0061799">
    <property type="term" value="F:cyclic pyranopterin monophosphate synthase activity"/>
    <property type="evidence" value="ECO:0007669"/>
    <property type="project" value="UniProtKB-UniRule"/>
</dbReference>
<dbReference type="GO" id="GO:0006777">
    <property type="term" value="P:Mo-molybdopterin cofactor biosynthetic process"/>
    <property type="evidence" value="ECO:0007669"/>
    <property type="project" value="UniProtKB-UniRule"/>
</dbReference>
<dbReference type="CDD" id="cd01420">
    <property type="entry name" value="MoaC_PE"/>
    <property type="match status" value="1"/>
</dbReference>
<dbReference type="Gene3D" id="3.30.70.640">
    <property type="entry name" value="Molybdopterin cofactor biosynthesis C (MoaC) domain"/>
    <property type="match status" value="1"/>
</dbReference>
<dbReference type="HAMAP" id="MF_01224_B">
    <property type="entry name" value="MoaC_B"/>
    <property type="match status" value="1"/>
</dbReference>
<dbReference type="InterPro" id="IPR023045">
    <property type="entry name" value="MoaC"/>
</dbReference>
<dbReference type="InterPro" id="IPR047594">
    <property type="entry name" value="MoaC_bact/euk"/>
</dbReference>
<dbReference type="InterPro" id="IPR036522">
    <property type="entry name" value="MoaC_sf"/>
</dbReference>
<dbReference type="InterPro" id="IPR050105">
    <property type="entry name" value="MoCo_biosynth_MoaA/MoaC"/>
</dbReference>
<dbReference type="InterPro" id="IPR002820">
    <property type="entry name" value="Mopterin_CF_biosynth-C_dom"/>
</dbReference>
<dbReference type="NCBIfam" id="TIGR00581">
    <property type="entry name" value="moaC"/>
    <property type="match status" value="1"/>
</dbReference>
<dbReference type="NCBIfam" id="NF006870">
    <property type="entry name" value="PRK09364.1"/>
    <property type="match status" value="1"/>
</dbReference>
<dbReference type="PANTHER" id="PTHR22960">
    <property type="entry name" value="MOLYBDOPTERIN COFACTOR SYNTHESIS PROTEIN A"/>
    <property type="match status" value="1"/>
</dbReference>
<dbReference type="Pfam" id="PF01967">
    <property type="entry name" value="MoaC"/>
    <property type="match status" value="1"/>
</dbReference>
<dbReference type="SUPFAM" id="SSF55040">
    <property type="entry name" value="Molybdenum cofactor biosynthesis protein C, MoaC"/>
    <property type="match status" value="1"/>
</dbReference>
<gene>
    <name evidence="1" type="primary">moaC</name>
    <name type="ordered locus">USA300HOU_2256</name>
</gene>
<name>MOAC_STAAT</name>
<proteinExistence type="inferred from homology"/>
<keyword id="KW-0456">Lyase</keyword>
<keyword id="KW-0501">Molybdenum cofactor biosynthesis</keyword>